<comment type="function">
    <text evidence="1">May act as a substrate-specific adapter of an E3 ubiquitin-protein ligase complex (CUL3-RBX1-BTB) which mediates the ubiquitination and subsequent proteasomal degradation of target proteins.</text>
</comment>
<comment type="pathway">
    <text>Protein modification; protein ubiquitination.</text>
</comment>
<comment type="domain">
    <text evidence="5">The BTB/POZ domain mediates the interaction with some component of ubiquitin ligase complexes.</text>
</comment>
<comment type="similarity">
    <text evidence="3">Belongs to the NPH3 family.</text>
</comment>
<comment type="sequence caution" evidence="6">
    <conflict type="frameshift">
        <sequence resource="EMBL" id="BT004059"/>
    </conflict>
</comment>
<comment type="sequence caution" evidence="6">
    <conflict type="erroneous gene model prediction">
        <sequence resource="EMBL-CDS" id="CAC03532"/>
    </conflict>
</comment>
<feature type="chain" id="PRO_0000409578" description="BTB/POZ domain-containing protein At3g44820">
    <location>
        <begin position="1"/>
        <end position="651"/>
    </location>
</feature>
<feature type="domain" description="BTB" evidence="2">
    <location>
        <begin position="25"/>
        <end position="96"/>
    </location>
</feature>
<feature type="domain" description="NPH3" evidence="3">
    <location>
        <begin position="211"/>
        <end position="509"/>
    </location>
</feature>
<feature type="region of interest" description="Disordered" evidence="4">
    <location>
        <begin position="611"/>
        <end position="651"/>
    </location>
</feature>
<feature type="compositionally biased region" description="Polar residues" evidence="4">
    <location>
        <begin position="615"/>
        <end position="627"/>
    </location>
</feature>
<feature type="compositionally biased region" description="Basic residues" evidence="4">
    <location>
        <begin position="637"/>
        <end position="651"/>
    </location>
</feature>
<reference key="1">
    <citation type="journal article" date="2000" name="Nature">
        <title>Sequence and analysis of chromosome 3 of the plant Arabidopsis thaliana.</title>
        <authorList>
            <person name="Salanoubat M."/>
            <person name="Lemcke K."/>
            <person name="Rieger M."/>
            <person name="Ansorge W."/>
            <person name="Unseld M."/>
            <person name="Fartmann B."/>
            <person name="Valle G."/>
            <person name="Bloecker H."/>
            <person name="Perez-Alonso M."/>
            <person name="Obermaier B."/>
            <person name="Delseny M."/>
            <person name="Boutry M."/>
            <person name="Grivell L.A."/>
            <person name="Mache R."/>
            <person name="Puigdomenech P."/>
            <person name="De Simone V."/>
            <person name="Choisne N."/>
            <person name="Artiguenave F."/>
            <person name="Robert C."/>
            <person name="Brottier P."/>
            <person name="Wincker P."/>
            <person name="Cattolico L."/>
            <person name="Weissenbach J."/>
            <person name="Saurin W."/>
            <person name="Quetier F."/>
            <person name="Schaefer M."/>
            <person name="Mueller-Auer S."/>
            <person name="Gabel C."/>
            <person name="Fuchs M."/>
            <person name="Benes V."/>
            <person name="Wurmbach E."/>
            <person name="Drzonek H."/>
            <person name="Erfle H."/>
            <person name="Jordan N."/>
            <person name="Bangert S."/>
            <person name="Wiedelmann R."/>
            <person name="Kranz H."/>
            <person name="Voss H."/>
            <person name="Holland R."/>
            <person name="Brandt P."/>
            <person name="Nyakatura G."/>
            <person name="Vezzi A."/>
            <person name="D'Angelo M."/>
            <person name="Pallavicini A."/>
            <person name="Toppo S."/>
            <person name="Simionati B."/>
            <person name="Conrad A."/>
            <person name="Hornischer K."/>
            <person name="Kauer G."/>
            <person name="Loehnert T.-H."/>
            <person name="Nordsiek G."/>
            <person name="Reichelt J."/>
            <person name="Scharfe M."/>
            <person name="Schoen O."/>
            <person name="Bargues M."/>
            <person name="Terol J."/>
            <person name="Climent J."/>
            <person name="Navarro P."/>
            <person name="Collado C."/>
            <person name="Perez-Perez A."/>
            <person name="Ottenwaelder B."/>
            <person name="Duchemin D."/>
            <person name="Cooke R."/>
            <person name="Laudie M."/>
            <person name="Berger-Llauro C."/>
            <person name="Purnelle B."/>
            <person name="Masuy D."/>
            <person name="de Haan M."/>
            <person name="Maarse A.C."/>
            <person name="Alcaraz J.-P."/>
            <person name="Cottet A."/>
            <person name="Casacuberta E."/>
            <person name="Monfort A."/>
            <person name="Argiriou A."/>
            <person name="Flores M."/>
            <person name="Liguori R."/>
            <person name="Vitale D."/>
            <person name="Mannhaupt G."/>
            <person name="Haase D."/>
            <person name="Schoof H."/>
            <person name="Rudd S."/>
            <person name="Zaccaria P."/>
            <person name="Mewes H.-W."/>
            <person name="Mayer K.F.X."/>
            <person name="Kaul S."/>
            <person name="Town C.D."/>
            <person name="Koo H.L."/>
            <person name="Tallon L.J."/>
            <person name="Jenkins J."/>
            <person name="Rooney T."/>
            <person name="Rizzo M."/>
            <person name="Walts A."/>
            <person name="Utterback T."/>
            <person name="Fujii C.Y."/>
            <person name="Shea T.P."/>
            <person name="Creasy T.H."/>
            <person name="Haas B."/>
            <person name="Maiti R."/>
            <person name="Wu D."/>
            <person name="Peterson J."/>
            <person name="Van Aken S."/>
            <person name="Pai G."/>
            <person name="Militscher J."/>
            <person name="Sellers P."/>
            <person name="Gill J.E."/>
            <person name="Feldblyum T.V."/>
            <person name="Preuss D."/>
            <person name="Lin X."/>
            <person name="Nierman W.C."/>
            <person name="Salzberg S.L."/>
            <person name="White O."/>
            <person name="Venter J.C."/>
            <person name="Fraser C.M."/>
            <person name="Kaneko T."/>
            <person name="Nakamura Y."/>
            <person name="Sato S."/>
            <person name="Kato T."/>
            <person name="Asamizu E."/>
            <person name="Sasamoto S."/>
            <person name="Kimura T."/>
            <person name="Idesawa K."/>
            <person name="Kawashima K."/>
            <person name="Kishida Y."/>
            <person name="Kiyokawa C."/>
            <person name="Kohara M."/>
            <person name="Matsumoto M."/>
            <person name="Matsuno A."/>
            <person name="Muraki A."/>
            <person name="Nakayama S."/>
            <person name="Nakazaki N."/>
            <person name="Shinpo S."/>
            <person name="Takeuchi C."/>
            <person name="Wada T."/>
            <person name="Watanabe A."/>
            <person name="Yamada M."/>
            <person name="Yasuda M."/>
            <person name="Tabata S."/>
        </authorList>
    </citation>
    <scope>NUCLEOTIDE SEQUENCE [LARGE SCALE GENOMIC DNA]</scope>
    <source>
        <strain>cv. Columbia</strain>
    </source>
</reference>
<reference key="2">
    <citation type="journal article" date="2017" name="Plant J.">
        <title>Araport11: a complete reannotation of the Arabidopsis thaliana reference genome.</title>
        <authorList>
            <person name="Cheng C.Y."/>
            <person name="Krishnakumar V."/>
            <person name="Chan A.P."/>
            <person name="Thibaud-Nissen F."/>
            <person name="Schobel S."/>
            <person name="Town C.D."/>
        </authorList>
    </citation>
    <scope>GENOME REANNOTATION</scope>
    <source>
        <strain>cv. Columbia</strain>
    </source>
</reference>
<reference key="3">
    <citation type="journal article" date="2003" name="Science">
        <title>Empirical analysis of transcriptional activity in the Arabidopsis genome.</title>
        <authorList>
            <person name="Yamada K."/>
            <person name="Lim J."/>
            <person name="Dale J.M."/>
            <person name="Chen H."/>
            <person name="Shinn P."/>
            <person name="Palm C.J."/>
            <person name="Southwick A.M."/>
            <person name="Wu H.C."/>
            <person name="Kim C.J."/>
            <person name="Nguyen M."/>
            <person name="Pham P.K."/>
            <person name="Cheuk R.F."/>
            <person name="Karlin-Newmann G."/>
            <person name="Liu S.X."/>
            <person name="Lam B."/>
            <person name="Sakano H."/>
            <person name="Wu T."/>
            <person name="Yu G."/>
            <person name="Miranda M."/>
            <person name="Quach H.L."/>
            <person name="Tripp M."/>
            <person name="Chang C.H."/>
            <person name="Lee J.M."/>
            <person name="Toriumi M.J."/>
            <person name="Chan M.M."/>
            <person name="Tang C.C."/>
            <person name="Onodera C.S."/>
            <person name="Deng J.M."/>
            <person name="Akiyama K."/>
            <person name="Ansari Y."/>
            <person name="Arakawa T."/>
            <person name="Banh J."/>
            <person name="Banno F."/>
            <person name="Bowser L."/>
            <person name="Brooks S.Y."/>
            <person name="Carninci P."/>
            <person name="Chao Q."/>
            <person name="Choy N."/>
            <person name="Enju A."/>
            <person name="Goldsmith A.D."/>
            <person name="Gurjal M."/>
            <person name="Hansen N.F."/>
            <person name="Hayashizaki Y."/>
            <person name="Johnson-Hopson C."/>
            <person name="Hsuan V.W."/>
            <person name="Iida K."/>
            <person name="Karnes M."/>
            <person name="Khan S."/>
            <person name="Koesema E."/>
            <person name="Ishida J."/>
            <person name="Jiang P.X."/>
            <person name="Jones T."/>
            <person name="Kawai J."/>
            <person name="Kamiya A."/>
            <person name="Meyers C."/>
            <person name="Nakajima M."/>
            <person name="Narusaka M."/>
            <person name="Seki M."/>
            <person name="Sakurai T."/>
            <person name="Satou M."/>
            <person name="Tamse R."/>
            <person name="Vaysberg M."/>
            <person name="Wallender E.K."/>
            <person name="Wong C."/>
            <person name="Yamamura Y."/>
            <person name="Yuan S."/>
            <person name="Shinozaki K."/>
            <person name="Davis R.W."/>
            <person name="Theologis A."/>
            <person name="Ecker J.R."/>
        </authorList>
    </citation>
    <scope>NUCLEOTIDE SEQUENCE [LARGE SCALE MRNA] OF 93-651</scope>
    <source>
        <strain>cv. Columbia</strain>
    </source>
</reference>
<reference key="4">
    <citation type="journal article" date="2005" name="J. Biol. Chem.">
        <title>Cullins 3a and 3b assemble with members of the broad complex/tramtrack/bric-a-brac (BTB) protein family to form essential ubiquitin-protein ligases (E3s) in Arabidopsis.</title>
        <authorList>
            <person name="Gingerich D.J."/>
            <person name="Gagne J.M."/>
            <person name="Salter D.W."/>
            <person name="Hellmann H."/>
            <person name="Estelle M."/>
            <person name="Ma L."/>
            <person name="Vierstra R.D."/>
        </authorList>
    </citation>
    <scope>DOMAIN BTB</scope>
</reference>
<evidence type="ECO:0000250" key="1"/>
<evidence type="ECO:0000255" key="2">
    <source>
        <dbReference type="PROSITE-ProRule" id="PRU00037"/>
    </source>
</evidence>
<evidence type="ECO:0000255" key="3">
    <source>
        <dbReference type="PROSITE-ProRule" id="PRU00982"/>
    </source>
</evidence>
<evidence type="ECO:0000256" key="4">
    <source>
        <dbReference type="SAM" id="MobiDB-lite"/>
    </source>
</evidence>
<evidence type="ECO:0000269" key="5">
    <source>
    </source>
</evidence>
<evidence type="ECO:0000305" key="6"/>
<protein>
    <recommendedName>
        <fullName>BTB/POZ domain-containing protein At3g44820</fullName>
    </recommendedName>
</protein>
<accession>Q9FYC8</accession>
<accession>F4J4A4</accession>
<keyword id="KW-1185">Reference proteome</keyword>
<keyword id="KW-0833">Ubl conjugation pathway</keyword>
<name>Y3482_ARATH</name>
<proteinExistence type="evidence at transcript level"/>
<organism>
    <name type="scientific">Arabidopsis thaliana</name>
    <name type="common">Mouse-ear cress</name>
    <dbReference type="NCBI Taxonomy" id="3702"/>
    <lineage>
        <taxon>Eukaryota</taxon>
        <taxon>Viridiplantae</taxon>
        <taxon>Streptophyta</taxon>
        <taxon>Embryophyta</taxon>
        <taxon>Tracheophyta</taxon>
        <taxon>Spermatophyta</taxon>
        <taxon>Magnoliopsida</taxon>
        <taxon>eudicotyledons</taxon>
        <taxon>Gunneridae</taxon>
        <taxon>Pentapetalae</taxon>
        <taxon>rosids</taxon>
        <taxon>malvids</taxon>
        <taxon>Brassicales</taxon>
        <taxon>Brassicaceae</taxon>
        <taxon>Camelineae</taxon>
        <taxon>Arabidopsis</taxon>
    </lineage>
</organism>
<sequence length="651" mass="72965">MSPVAKVSEFHREGNDWFCKTGLSSDITVVVDDVKFHLHKFPLVSKCGKLARMYEDSKSTDKQSLWTTVLEEFPGGADNFLIVARFCYGARVDITSKNLVSIHCAAEYLEMTNEYGEDNLISQVETFLHKHVLRNWKDCILALQSSSPVLKSAEKLQMIPKLMNAVSTMVCTDPSLFGWPMMMYGTLQSPGGSILWNGINTGARMRSSGSDWWYEDISYLSVDLFKRLIKTMETKGIRAESLAGAMMYYARKYLPGLGRWQSGTSDSSKSRRRVVSFNLAKASSPSSMPPLDQIALLETILSLLPEKRGRSFCKFLLGLLRVAFILGVDGNCVKKLEKRIGMQLELATLDNLLILNYSDSETLYNVDCVERIVRHFVSSLSSSSSQLPEFSPPSLDPVTSPSPAPLKKVANLVDSYMAEVASDVNLKPDKMRSLAAALPESSRPLYDGLYRAFDIYFKEHPWLSDRDKEQLCNIMDYQRLSIDACAHASHNDRLPLRVVLQVLFFEQMHLRTALAGGLNVANTETAHAVTIPGGRTGQEIVQRDGWVTVVRQNQVLKVDMQKMRSRVGELEEEFQSIKQEMKKRVSKSSSSMSSPRLVKLGCKFLLPRASDAKNDTVQNSVSSTPRSATADHTLPRSSRHSKHRKSFSFFG</sequence>
<gene>
    <name type="ordered locus">At3g44820</name>
    <name type="ORF">F28D10.10</name>
</gene>
<dbReference type="EMBL" id="AL391254">
    <property type="protein sequence ID" value="CAC03532.1"/>
    <property type="status" value="ALT_SEQ"/>
    <property type="molecule type" value="Genomic_DNA"/>
</dbReference>
<dbReference type="EMBL" id="CP002686">
    <property type="protein sequence ID" value="AEE77958.1"/>
    <property type="molecule type" value="Genomic_DNA"/>
</dbReference>
<dbReference type="EMBL" id="BT004059">
    <property type="status" value="NOT_ANNOTATED_CDS"/>
    <property type="molecule type" value="mRNA"/>
</dbReference>
<dbReference type="PIR" id="T51779">
    <property type="entry name" value="T51779"/>
</dbReference>
<dbReference type="RefSeq" id="NP_190068.4">
    <property type="nucleotide sequence ID" value="NM_114351.5"/>
</dbReference>
<dbReference type="SMR" id="Q9FYC8"/>
<dbReference type="FunCoup" id="Q9FYC8">
    <property type="interactions" value="161"/>
</dbReference>
<dbReference type="STRING" id="3702.Q9FYC8"/>
<dbReference type="iPTMnet" id="Q9FYC8"/>
<dbReference type="PaxDb" id="3702-AT3G44820.1"/>
<dbReference type="ProteomicsDB" id="234610"/>
<dbReference type="EnsemblPlants" id="AT3G44820.1">
    <property type="protein sequence ID" value="AT3G44820.1"/>
    <property type="gene ID" value="AT3G44820"/>
</dbReference>
<dbReference type="GeneID" id="823616"/>
<dbReference type="Gramene" id="AT3G44820.1">
    <property type="protein sequence ID" value="AT3G44820.1"/>
    <property type="gene ID" value="AT3G44820"/>
</dbReference>
<dbReference type="KEGG" id="ath:AT3G44820"/>
<dbReference type="Araport" id="AT3G44820"/>
<dbReference type="TAIR" id="AT3G44820"/>
<dbReference type="eggNOG" id="ENOG502QTAS">
    <property type="taxonomic scope" value="Eukaryota"/>
</dbReference>
<dbReference type="HOGENOM" id="CLU_005994_6_2_1"/>
<dbReference type="InParanoid" id="Q9FYC8"/>
<dbReference type="OMA" id="CVERMIH"/>
<dbReference type="UniPathway" id="UPA00143"/>
<dbReference type="PRO" id="PR:Q9FYC8"/>
<dbReference type="Proteomes" id="UP000006548">
    <property type="component" value="Chromosome 3"/>
</dbReference>
<dbReference type="ExpressionAtlas" id="Q9FYC8">
    <property type="expression patterns" value="baseline and differential"/>
</dbReference>
<dbReference type="GO" id="GO:0016567">
    <property type="term" value="P:protein ubiquitination"/>
    <property type="evidence" value="ECO:0007669"/>
    <property type="project" value="UniProtKB-UniPathway"/>
</dbReference>
<dbReference type="CDD" id="cd00043">
    <property type="entry name" value="CYCLIN_SF"/>
    <property type="match status" value="1"/>
</dbReference>
<dbReference type="Gene3D" id="3.30.710.10">
    <property type="entry name" value="Potassium Channel Kv1.1, Chain A"/>
    <property type="match status" value="1"/>
</dbReference>
<dbReference type="InterPro" id="IPR000210">
    <property type="entry name" value="BTB/POZ_dom"/>
</dbReference>
<dbReference type="InterPro" id="IPR043454">
    <property type="entry name" value="NPH3/RPT2-like"/>
</dbReference>
<dbReference type="InterPro" id="IPR027356">
    <property type="entry name" value="NPH3_dom"/>
</dbReference>
<dbReference type="InterPro" id="IPR011333">
    <property type="entry name" value="SKP1/BTB/POZ_sf"/>
</dbReference>
<dbReference type="PANTHER" id="PTHR32370">
    <property type="entry name" value="OS12G0117600 PROTEIN"/>
    <property type="match status" value="1"/>
</dbReference>
<dbReference type="Pfam" id="PF00651">
    <property type="entry name" value="BTB"/>
    <property type="match status" value="1"/>
</dbReference>
<dbReference type="Pfam" id="PF03000">
    <property type="entry name" value="NPH3"/>
    <property type="match status" value="1"/>
</dbReference>
<dbReference type="SMART" id="SM00225">
    <property type="entry name" value="BTB"/>
    <property type="match status" value="1"/>
</dbReference>
<dbReference type="SUPFAM" id="SSF54695">
    <property type="entry name" value="POZ domain"/>
    <property type="match status" value="1"/>
</dbReference>
<dbReference type="PROSITE" id="PS50097">
    <property type="entry name" value="BTB"/>
    <property type="match status" value="1"/>
</dbReference>
<dbReference type="PROSITE" id="PS51649">
    <property type="entry name" value="NPH3"/>
    <property type="match status" value="1"/>
</dbReference>